<feature type="chain" id="PRO_0000176277" description="Elongation factor 4">
    <location>
        <begin position="1"/>
        <end position="600"/>
    </location>
</feature>
<feature type="domain" description="tr-type G">
    <location>
        <begin position="4"/>
        <end position="186"/>
    </location>
</feature>
<feature type="binding site" evidence="1">
    <location>
        <begin position="16"/>
        <end position="21"/>
    </location>
    <ligand>
        <name>GTP</name>
        <dbReference type="ChEBI" id="CHEBI:37565"/>
    </ligand>
</feature>
<feature type="binding site" evidence="1">
    <location>
        <begin position="133"/>
        <end position="136"/>
    </location>
    <ligand>
        <name>GTP</name>
        <dbReference type="ChEBI" id="CHEBI:37565"/>
    </ligand>
</feature>
<protein>
    <recommendedName>
        <fullName evidence="1">Elongation factor 4</fullName>
        <shortName evidence="1">EF-4</shortName>
        <ecNumber evidence="1">3.6.5.n1</ecNumber>
    </recommendedName>
    <alternativeName>
        <fullName evidence="1">Ribosomal back-translocase LepA</fullName>
    </alternativeName>
</protein>
<proteinExistence type="inferred from homology"/>
<comment type="function">
    <text evidence="1">Required for accurate and efficient protein synthesis under certain stress conditions. May act as a fidelity factor of the translation reaction, by catalyzing a one-codon backward translocation of tRNAs on improperly translocated ribosomes. Back-translocation proceeds from a post-translocation (POST) complex to a pre-translocation (PRE) complex, thus giving elongation factor G a second chance to translocate the tRNAs correctly. Binds to ribosomes in a GTP-dependent manner.</text>
</comment>
<comment type="catalytic activity">
    <reaction evidence="1">
        <text>GTP + H2O = GDP + phosphate + H(+)</text>
        <dbReference type="Rhea" id="RHEA:19669"/>
        <dbReference type="ChEBI" id="CHEBI:15377"/>
        <dbReference type="ChEBI" id="CHEBI:15378"/>
        <dbReference type="ChEBI" id="CHEBI:37565"/>
        <dbReference type="ChEBI" id="CHEBI:43474"/>
        <dbReference type="ChEBI" id="CHEBI:58189"/>
        <dbReference type="EC" id="3.6.5.n1"/>
    </reaction>
</comment>
<comment type="subcellular location">
    <subcellularLocation>
        <location evidence="1">Cell inner membrane</location>
        <topology evidence="1">Peripheral membrane protein</topology>
        <orientation evidence="1">Cytoplasmic side</orientation>
    </subcellularLocation>
</comment>
<comment type="similarity">
    <text evidence="1">Belongs to the TRAFAC class translation factor GTPase superfamily. Classic translation factor GTPase family. LepA subfamily.</text>
</comment>
<evidence type="ECO:0000255" key="1">
    <source>
        <dbReference type="HAMAP-Rule" id="MF_00071"/>
    </source>
</evidence>
<sequence length="600" mass="67266">MKIDTIRNFSIIAHIDHGKSTLADRLLEYTGALTEREMQDQFLDKMDLERERGITIKAQTVRLTYRADDGNDYILNLIDTPGHVDFTYEVSRSLAACEGALLVVDASQGVEAQTLANVYLAIDNNLEVFPVLNKIDLPAAEPERVKHEIEEIIGLDAHDAVMASAKEGIGTREILEEIVKKIPPPEGDPAAPLKALLFDSWYDQYQGVIILVRVIDGTVKKGDKIQLVSTGRSYEALKVGVFAPVMREVPQLAAGEVGFLIAGIKDVADAKIGDTVTHALKPCVTPLGGFKEVKPMVFSGLYPIDTAQYEQLRDALAKLKLNDSSFSFEPETSLALGFGFRCGFLGLLHMEIIQERLEREFNLDLITTAPTVVYKVHRIKGDVITIESANQLPPLQEIDYIEEPFILASIHTPNEFVGGILSLCEEKRGVQREIKYLTPTRVMIIYELPLNEVVLDFYDRLKSITKGYASLDYEHLNYRRSDLVRMNILINGEAVDALSLIIHRDKAYYRGRDLVSKMKELIPRQMFEVVIQAAIGAKVIARETVKALRKDVLAKCYGGDITRKRKLLEKQKEGKKRMKNVGNVELPQEAFLAILKVEEK</sequence>
<gene>
    <name evidence="1" type="primary">lepA</name>
    <name type="ordered locus">GSU1266</name>
</gene>
<dbReference type="EC" id="3.6.5.n1" evidence="1"/>
<dbReference type="EMBL" id="AE017180">
    <property type="protein sequence ID" value="AAR34642.1"/>
    <property type="molecule type" value="Genomic_DNA"/>
</dbReference>
<dbReference type="RefSeq" id="NP_952319.1">
    <property type="nucleotide sequence ID" value="NC_002939.5"/>
</dbReference>
<dbReference type="RefSeq" id="WP_010941921.1">
    <property type="nucleotide sequence ID" value="NC_002939.5"/>
</dbReference>
<dbReference type="SMR" id="P60789"/>
<dbReference type="FunCoup" id="P60789">
    <property type="interactions" value="566"/>
</dbReference>
<dbReference type="STRING" id="243231.GSU1266"/>
<dbReference type="EnsemblBacteria" id="AAR34642">
    <property type="protein sequence ID" value="AAR34642"/>
    <property type="gene ID" value="GSU1266"/>
</dbReference>
<dbReference type="KEGG" id="gsu:GSU1266"/>
<dbReference type="PATRIC" id="fig|243231.5.peg.1261"/>
<dbReference type="eggNOG" id="COG0481">
    <property type="taxonomic scope" value="Bacteria"/>
</dbReference>
<dbReference type="HOGENOM" id="CLU_009995_3_3_7"/>
<dbReference type="InParanoid" id="P60789"/>
<dbReference type="OrthoDB" id="9801591at2"/>
<dbReference type="Proteomes" id="UP000000577">
    <property type="component" value="Chromosome"/>
</dbReference>
<dbReference type="GO" id="GO:0005886">
    <property type="term" value="C:plasma membrane"/>
    <property type="evidence" value="ECO:0007669"/>
    <property type="project" value="UniProtKB-SubCell"/>
</dbReference>
<dbReference type="GO" id="GO:0005525">
    <property type="term" value="F:GTP binding"/>
    <property type="evidence" value="ECO:0007669"/>
    <property type="project" value="UniProtKB-UniRule"/>
</dbReference>
<dbReference type="GO" id="GO:0003924">
    <property type="term" value="F:GTPase activity"/>
    <property type="evidence" value="ECO:0007669"/>
    <property type="project" value="UniProtKB-UniRule"/>
</dbReference>
<dbReference type="GO" id="GO:0043022">
    <property type="term" value="F:ribosome binding"/>
    <property type="evidence" value="ECO:0000318"/>
    <property type="project" value="GO_Central"/>
</dbReference>
<dbReference type="GO" id="GO:0003746">
    <property type="term" value="F:translation elongation factor activity"/>
    <property type="evidence" value="ECO:0007669"/>
    <property type="project" value="UniProtKB-UniRule"/>
</dbReference>
<dbReference type="GO" id="GO:0045727">
    <property type="term" value="P:positive regulation of translation"/>
    <property type="evidence" value="ECO:0000318"/>
    <property type="project" value="GO_Central"/>
</dbReference>
<dbReference type="CDD" id="cd03699">
    <property type="entry name" value="EF4_II"/>
    <property type="match status" value="1"/>
</dbReference>
<dbReference type="CDD" id="cd16260">
    <property type="entry name" value="EF4_III"/>
    <property type="match status" value="1"/>
</dbReference>
<dbReference type="CDD" id="cd01890">
    <property type="entry name" value="LepA"/>
    <property type="match status" value="1"/>
</dbReference>
<dbReference type="CDD" id="cd03709">
    <property type="entry name" value="lepA_C"/>
    <property type="match status" value="1"/>
</dbReference>
<dbReference type="FunFam" id="3.40.50.300:FF:000078">
    <property type="entry name" value="Elongation factor 4"/>
    <property type="match status" value="1"/>
</dbReference>
<dbReference type="FunFam" id="2.40.30.10:FF:000015">
    <property type="entry name" value="Translation factor GUF1, mitochondrial"/>
    <property type="match status" value="1"/>
</dbReference>
<dbReference type="FunFam" id="3.30.70.240:FF:000007">
    <property type="entry name" value="Translation factor GUF1, mitochondrial"/>
    <property type="match status" value="1"/>
</dbReference>
<dbReference type="FunFam" id="3.30.70.2570:FF:000001">
    <property type="entry name" value="Translation factor GUF1, mitochondrial"/>
    <property type="match status" value="1"/>
</dbReference>
<dbReference type="FunFam" id="3.30.70.870:FF:000004">
    <property type="entry name" value="Translation factor GUF1, mitochondrial"/>
    <property type="match status" value="1"/>
</dbReference>
<dbReference type="Gene3D" id="3.30.70.240">
    <property type="match status" value="1"/>
</dbReference>
<dbReference type="Gene3D" id="3.30.70.2570">
    <property type="entry name" value="Elongation factor 4, C-terminal domain"/>
    <property type="match status" value="1"/>
</dbReference>
<dbReference type="Gene3D" id="3.30.70.870">
    <property type="entry name" value="Elongation Factor G (Translational Gtpase), domain 3"/>
    <property type="match status" value="1"/>
</dbReference>
<dbReference type="Gene3D" id="3.40.50.300">
    <property type="entry name" value="P-loop containing nucleotide triphosphate hydrolases"/>
    <property type="match status" value="1"/>
</dbReference>
<dbReference type="Gene3D" id="2.40.30.10">
    <property type="entry name" value="Translation factors"/>
    <property type="match status" value="1"/>
</dbReference>
<dbReference type="HAMAP" id="MF_00071">
    <property type="entry name" value="LepA"/>
    <property type="match status" value="1"/>
</dbReference>
<dbReference type="InterPro" id="IPR006297">
    <property type="entry name" value="EF-4"/>
</dbReference>
<dbReference type="InterPro" id="IPR035647">
    <property type="entry name" value="EFG_III/V"/>
</dbReference>
<dbReference type="InterPro" id="IPR000640">
    <property type="entry name" value="EFG_V-like"/>
</dbReference>
<dbReference type="InterPro" id="IPR004161">
    <property type="entry name" value="EFTu-like_2"/>
</dbReference>
<dbReference type="InterPro" id="IPR031157">
    <property type="entry name" value="G_TR_CS"/>
</dbReference>
<dbReference type="InterPro" id="IPR038363">
    <property type="entry name" value="LepA_C_sf"/>
</dbReference>
<dbReference type="InterPro" id="IPR013842">
    <property type="entry name" value="LepA_CTD"/>
</dbReference>
<dbReference type="InterPro" id="IPR035654">
    <property type="entry name" value="LepA_IV"/>
</dbReference>
<dbReference type="InterPro" id="IPR027417">
    <property type="entry name" value="P-loop_NTPase"/>
</dbReference>
<dbReference type="InterPro" id="IPR005225">
    <property type="entry name" value="Small_GTP-bd"/>
</dbReference>
<dbReference type="InterPro" id="IPR000795">
    <property type="entry name" value="T_Tr_GTP-bd_dom"/>
</dbReference>
<dbReference type="InterPro" id="IPR009000">
    <property type="entry name" value="Transl_B-barrel_sf"/>
</dbReference>
<dbReference type="NCBIfam" id="TIGR01393">
    <property type="entry name" value="lepA"/>
    <property type="match status" value="1"/>
</dbReference>
<dbReference type="NCBIfam" id="TIGR00231">
    <property type="entry name" value="small_GTP"/>
    <property type="match status" value="1"/>
</dbReference>
<dbReference type="PANTHER" id="PTHR43512:SF4">
    <property type="entry name" value="TRANSLATION FACTOR GUF1 HOMOLOG, CHLOROPLASTIC"/>
    <property type="match status" value="1"/>
</dbReference>
<dbReference type="PANTHER" id="PTHR43512">
    <property type="entry name" value="TRANSLATION FACTOR GUF1-RELATED"/>
    <property type="match status" value="1"/>
</dbReference>
<dbReference type="Pfam" id="PF00679">
    <property type="entry name" value="EFG_C"/>
    <property type="match status" value="1"/>
</dbReference>
<dbReference type="Pfam" id="PF00009">
    <property type="entry name" value="GTP_EFTU"/>
    <property type="match status" value="1"/>
</dbReference>
<dbReference type="Pfam" id="PF03144">
    <property type="entry name" value="GTP_EFTU_D2"/>
    <property type="match status" value="1"/>
</dbReference>
<dbReference type="Pfam" id="PF06421">
    <property type="entry name" value="LepA_C"/>
    <property type="match status" value="1"/>
</dbReference>
<dbReference type="PRINTS" id="PR00315">
    <property type="entry name" value="ELONGATNFCT"/>
</dbReference>
<dbReference type="SUPFAM" id="SSF54980">
    <property type="entry name" value="EF-G C-terminal domain-like"/>
    <property type="match status" value="2"/>
</dbReference>
<dbReference type="SUPFAM" id="SSF52540">
    <property type="entry name" value="P-loop containing nucleoside triphosphate hydrolases"/>
    <property type="match status" value="1"/>
</dbReference>
<dbReference type="SUPFAM" id="SSF50447">
    <property type="entry name" value="Translation proteins"/>
    <property type="match status" value="1"/>
</dbReference>
<dbReference type="PROSITE" id="PS00301">
    <property type="entry name" value="G_TR_1"/>
    <property type="match status" value="1"/>
</dbReference>
<dbReference type="PROSITE" id="PS51722">
    <property type="entry name" value="G_TR_2"/>
    <property type="match status" value="1"/>
</dbReference>
<name>LEPA_GEOSL</name>
<accession>P60789</accession>
<keyword id="KW-0997">Cell inner membrane</keyword>
<keyword id="KW-1003">Cell membrane</keyword>
<keyword id="KW-0342">GTP-binding</keyword>
<keyword id="KW-0378">Hydrolase</keyword>
<keyword id="KW-0472">Membrane</keyword>
<keyword id="KW-0547">Nucleotide-binding</keyword>
<keyword id="KW-0648">Protein biosynthesis</keyword>
<keyword id="KW-1185">Reference proteome</keyword>
<reference key="1">
    <citation type="journal article" date="2003" name="Science">
        <title>Genome of Geobacter sulfurreducens: metal reduction in subsurface environments.</title>
        <authorList>
            <person name="Methe B.A."/>
            <person name="Nelson K.E."/>
            <person name="Eisen J.A."/>
            <person name="Paulsen I.T."/>
            <person name="Nelson W.C."/>
            <person name="Heidelberg J.F."/>
            <person name="Wu D."/>
            <person name="Wu M."/>
            <person name="Ward N.L."/>
            <person name="Beanan M.J."/>
            <person name="Dodson R.J."/>
            <person name="Madupu R."/>
            <person name="Brinkac L.M."/>
            <person name="Daugherty S.C."/>
            <person name="DeBoy R.T."/>
            <person name="Durkin A.S."/>
            <person name="Gwinn M.L."/>
            <person name="Kolonay J.F."/>
            <person name="Sullivan S.A."/>
            <person name="Haft D.H."/>
            <person name="Selengut J."/>
            <person name="Davidsen T.M."/>
            <person name="Zafar N."/>
            <person name="White O."/>
            <person name="Tran B."/>
            <person name="Romero C."/>
            <person name="Forberger H.A."/>
            <person name="Weidman J.F."/>
            <person name="Khouri H.M."/>
            <person name="Feldblyum T.V."/>
            <person name="Utterback T.R."/>
            <person name="Van Aken S.E."/>
            <person name="Lovley D.R."/>
            <person name="Fraser C.M."/>
        </authorList>
    </citation>
    <scope>NUCLEOTIDE SEQUENCE [LARGE SCALE GENOMIC DNA]</scope>
    <source>
        <strain>ATCC 51573 / DSM 12127 / PCA</strain>
    </source>
</reference>
<organism>
    <name type="scientific">Geobacter sulfurreducens (strain ATCC 51573 / DSM 12127 / PCA)</name>
    <dbReference type="NCBI Taxonomy" id="243231"/>
    <lineage>
        <taxon>Bacteria</taxon>
        <taxon>Pseudomonadati</taxon>
        <taxon>Thermodesulfobacteriota</taxon>
        <taxon>Desulfuromonadia</taxon>
        <taxon>Geobacterales</taxon>
        <taxon>Geobacteraceae</taxon>
        <taxon>Geobacter</taxon>
    </lineage>
</organism>